<reference key="1">
    <citation type="journal article" date="2008" name="Antimicrob. Agents Chemother.">
        <title>Mutated response regulator graR is responsible for phenotypic conversion of Staphylococcus aureus from heterogeneous vancomycin-intermediate resistance to vancomycin-intermediate resistance.</title>
        <authorList>
            <person name="Neoh H.-M."/>
            <person name="Cui L."/>
            <person name="Yuzawa H."/>
            <person name="Takeuchi F."/>
            <person name="Matsuo M."/>
            <person name="Hiramatsu K."/>
        </authorList>
    </citation>
    <scope>NUCLEOTIDE SEQUENCE [LARGE SCALE GENOMIC DNA]</scope>
    <source>
        <strain>Mu3 / ATCC 700698</strain>
    </source>
</reference>
<dbReference type="EC" id="2.5.1.6" evidence="1"/>
<dbReference type="EMBL" id="AP009324">
    <property type="protein sequence ID" value="BAF78658.1"/>
    <property type="molecule type" value="Genomic_DNA"/>
</dbReference>
<dbReference type="RefSeq" id="WP_000933820.1">
    <property type="nucleotide sequence ID" value="NC_009782.1"/>
</dbReference>
<dbReference type="SMR" id="A7X3N2"/>
<dbReference type="KEGG" id="saw:SAHV_1775"/>
<dbReference type="HOGENOM" id="CLU_041802_1_1_9"/>
<dbReference type="UniPathway" id="UPA00315">
    <property type="reaction ID" value="UER00080"/>
</dbReference>
<dbReference type="GO" id="GO:0005737">
    <property type="term" value="C:cytoplasm"/>
    <property type="evidence" value="ECO:0007669"/>
    <property type="project" value="UniProtKB-SubCell"/>
</dbReference>
<dbReference type="GO" id="GO:0005524">
    <property type="term" value="F:ATP binding"/>
    <property type="evidence" value="ECO:0007669"/>
    <property type="project" value="UniProtKB-UniRule"/>
</dbReference>
<dbReference type="GO" id="GO:0000287">
    <property type="term" value="F:magnesium ion binding"/>
    <property type="evidence" value="ECO:0007669"/>
    <property type="project" value="UniProtKB-UniRule"/>
</dbReference>
<dbReference type="GO" id="GO:0004478">
    <property type="term" value="F:methionine adenosyltransferase activity"/>
    <property type="evidence" value="ECO:0007669"/>
    <property type="project" value="UniProtKB-UniRule"/>
</dbReference>
<dbReference type="GO" id="GO:0006730">
    <property type="term" value="P:one-carbon metabolic process"/>
    <property type="evidence" value="ECO:0007669"/>
    <property type="project" value="UniProtKB-KW"/>
</dbReference>
<dbReference type="GO" id="GO:0006556">
    <property type="term" value="P:S-adenosylmethionine biosynthetic process"/>
    <property type="evidence" value="ECO:0007669"/>
    <property type="project" value="UniProtKB-UniRule"/>
</dbReference>
<dbReference type="CDD" id="cd18079">
    <property type="entry name" value="S-AdoMet_synt"/>
    <property type="match status" value="1"/>
</dbReference>
<dbReference type="FunFam" id="3.30.300.10:FF:000003">
    <property type="entry name" value="S-adenosylmethionine synthase"/>
    <property type="match status" value="1"/>
</dbReference>
<dbReference type="FunFam" id="3.30.300.10:FF:000004">
    <property type="entry name" value="S-adenosylmethionine synthase"/>
    <property type="match status" value="1"/>
</dbReference>
<dbReference type="Gene3D" id="3.30.300.10">
    <property type="match status" value="3"/>
</dbReference>
<dbReference type="HAMAP" id="MF_00086">
    <property type="entry name" value="S_AdoMet_synth1"/>
    <property type="match status" value="1"/>
</dbReference>
<dbReference type="InterPro" id="IPR022631">
    <property type="entry name" value="ADOMET_SYNTHASE_CS"/>
</dbReference>
<dbReference type="InterPro" id="IPR022630">
    <property type="entry name" value="S-AdoMet_synt_C"/>
</dbReference>
<dbReference type="InterPro" id="IPR022629">
    <property type="entry name" value="S-AdoMet_synt_central"/>
</dbReference>
<dbReference type="InterPro" id="IPR022628">
    <property type="entry name" value="S-AdoMet_synt_N"/>
</dbReference>
<dbReference type="InterPro" id="IPR002133">
    <property type="entry name" value="S-AdoMet_synthetase"/>
</dbReference>
<dbReference type="InterPro" id="IPR022636">
    <property type="entry name" value="S-AdoMet_synthetase_sfam"/>
</dbReference>
<dbReference type="NCBIfam" id="TIGR01034">
    <property type="entry name" value="metK"/>
    <property type="match status" value="1"/>
</dbReference>
<dbReference type="PANTHER" id="PTHR11964">
    <property type="entry name" value="S-ADENOSYLMETHIONINE SYNTHETASE"/>
    <property type="match status" value="1"/>
</dbReference>
<dbReference type="Pfam" id="PF02773">
    <property type="entry name" value="S-AdoMet_synt_C"/>
    <property type="match status" value="1"/>
</dbReference>
<dbReference type="Pfam" id="PF02772">
    <property type="entry name" value="S-AdoMet_synt_M"/>
    <property type="match status" value="1"/>
</dbReference>
<dbReference type="Pfam" id="PF00438">
    <property type="entry name" value="S-AdoMet_synt_N"/>
    <property type="match status" value="1"/>
</dbReference>
<dbReference type="PIRSF" id="PIRSF000497">
    <property type="entry name" value="MAT"/>
    <property type="match status" value="1"/>
</dbReference>
<dbReference type="SUPFAM" id="SSF55973">
    <property type="entry name" value="S-adenosylmethionine synthetase"/>
    <property type="match status" value="3"/>
</dbReference>
<dbReference type="PROSITE" id="PS00376">
    <property type="entry name" value="ADOMET_SYNTHASE_1"/>
    <property type="match status" value="1"/>
</dbReference>
<dbReference type="PROSITE" id="PS00377">
    <property type="entry name" value="ADOMET_SYNTHASE_2"/>
    <property type="match status" value="1"/>
</dbReference>
<gene>
    <name evidence="1" type="primary">metK</name>
    <name type="ordered locus">SAHV_1775</name>
</gene>
<sequence>MLNNKRLFTSESVTEGHPDKIADQVSDAILDAILKDDPNARVACETTVTTGMALIAGEISTTTYVDIPKVVRETIKEIGYTRAKYGYDYETMAILTAIDEQSPDIAQGVDKALEYRDKDSEEEIEATGAGDQGLMFGYATNETETYMPLAIYLSHQLAKRLSDVRKDGTLNYLRPDGKVQVTVEYDENDNPVRIDTIVVSTQHADDVTLEQIQEDIKAHVIYPTVPENLINEQTKFYINPTGRFVIGGPQGDAGLTGRKIIVDTYGGYARHGGGCFSGKDPTKVDRSAAYAARYVAKNIVAAGLADQCEVQLAYAIGVAEPVSIAIDTFGTGKVSEGQLVEAVRKHFDLRPAGIIKMLDLKQPIYKQTAAYGHFGRTDVLFPWEKLDKVEELKDAVKY</sequence>
<accession>A7X3N2</accession>
<feature type="chain" id="PRO_1000007957" description="S-adenosylmethionine synthase">
    <location>
        <begin position="1"/>
        <end position="398"/>
    </location>
</feature>
<feature type="region of interest" description="Flexible loop" evidence="1">
    <location>
        <begin position="101"/>
        <end position="111"/>
    </location>
</feature>
<feature type="binding site" description="in other chain" evidence="1">
    <location>
        <position position="17"/>
    </location>
    <ligand>
        <name>ATP</name>
        <dbReference type="ChEBI" id="CHEBI:30616"/>
        <note>ligand shared between two neighboring subunits</note>
    </ligand>
</feature>
<feature type="binding site" evidence="1">
    <location>
        <position position="19"/>
    </location>
    <ligand>
        <name>Mg(2+)</name>
        <dbReference type="ChEBI" id="CHEBI:18420"/>
    </ligand>
</feature>
<feature type="binding site" evidence="1">
    <location>
        <position position="45"/>
    </location>
    <ligand>
        <name>K(+)</name>
        <dbReference type="ChEBI" id="CHEBI:29103"/>
    </ligand>
</feature>
<feature type="binding site" description="in other chain" evidence="1">
    <location>
        <position position="58"/>
    </location>
    <ligand>
        <name>L-methionine</name>
        <dbReference type="ChEBI" id="CHEBI:57844"/>
        <note>ligand shared between two neighboring subunits</note>
    </ligand>
</feature>
<feature type="binding site" description="in other chain" evidence="1">
    <location>
        <position position="101"/>
    </location>
    <ligand>
        <name>L-methionine</name>
        <dbReference type="ChEBI" id="CHEBI:57844"/>
        <note>ligand shared between two neighboring subunits</note>
    </ligand>
</feature>
<feature type="binding site" description="in other chain" evidence="1">
    <location>
        <begin position="176"/>
        <end position="178"/>
    </location>
    <ligand>
        <name>ATP</name>
        <dbReference type="ChEBI" id="CHEBI:30616"/>
        <note>ligand shared between two neighboring subunits</note>
    </ligand>
</feature>
<feature type="binding site" description="in other chain" evidence="1">
    <location>
        <begin position="243"/>
        <end position="244"/>
    </location>
    <ligand>
        <name>ATP</name>
        <dbReference type="ChEBI" id="CHEBI:30616"/>
        <note>ligand shared between two neighboring subunits</note>
    </ligand>
</feature>
<feature type="binding site" evidence="1">
    <location>
        <position position="252"/>
    </location>
    <ligand>
        <name>ATP</name>
        <dbReference type="ChEBI" id="CHEBI:30616"/>
        <note>ligand shared between two neighboring subunits</note>
    </ligand>
</feature>
<feature type="binding site" evidence="1">
    <location>
        <position position="252"/>
    </location>
    <ligand>
        <name>L-methionine</name>
        <dbReference type="ChEBI" id="CHEBI:57844"/>
        <note>ligand shared between two neighboring subunits</note>
    </ligand>
</feature>
<feature type="binding site" description="in other chain" evidence="1">
    <location>
        <begin position="258"/>
        <end position="259"/>
    </location>
    <ligand>
        <name>ATP</name>
        <dbReference type="ChEBI" id="CHEBI:30616"/>
        <note>ligand shared between two neighboring subunits</note>
    </ligand>
</feature>
<feature type="binding site" evidence="1">
    <location>
        <position position="279"/>
    </location>
    <ligand>
        <name>ATP</name>
        <dbReference type="ChEBI" id="CHEBI:30616"/>
        <note>ligand shared between two neighboring subunits</note>
    </ligand>
</feature>
<feature type="binding site" description="in other chain" evidence="1">
    <location>
        <position position="283"/>
    </location>
    <ligand>
        <name>L-methionine</name>
        <dbReference type="ChEBI" id="CHEBI:57844"/>
        <note>ligand shared between two neighboring subunits</note>
    </ligand>
</feature>
<comment type="function">
    <text evidence="1">Catalyzes the formation of S-adenosylmethionine (AdoMet) from methionine and ATP. The overall synthetic reaction is composed of two sequential steps, AdoMet formation and the subsequent tripolyphosphate hydrolysis which occurs prior to release of AdoMet from the enzyme.</text>
</comment>
<comment type="catalytic activity">
    <reaction evidence="1">
        <text>L-methionine + ATP + H2O = S-adenosyl-L-methionine + phosphate + diphosphate</text>
        <dbReference type="Rhea" id="RHEA:21080"/>
        <dbReference type="ChEBI" id="CHEBI:15377"/>
        <dbReference type="ChEBI" id="CHEBI:30616"/>
        <dbReference type="ChEBI" id="CHEBI:33019"/>
        <dbReference type="ChEBI" id="CHEBI:43474"/>
        <dbReference type="ChEBI" id="CHEBI:57844"/>
        <dbReference type="ChEBI" id="CHEBI:59789"/>
        <dbReference type="EC" id="2.5.1.6"/>
    </reaction>
</comment>
<comment type="cofactor">
    <cofactor evidence="1">
        <name>Mg(2+)</name>
        <dbReference type="ChEBI" id="CHEBI:18420"/>
    </cofactor>
    <text evidence="1">Binds 2 divalent ions per subunit.</text>
</comment>
<comment type="cofactor">
    <cofactor evidence="1">
        <name>K(+)</name>
        <dbReference type="ChEBI" id="CHEBI:29103"/>
    </cofactor>
    <text evidence="1">Binds 1 potassium ion per subunit.</text>
</comment>
<comment type="pathway">
    <text evidence="1">Amino-acid biosynthesis; S-adenosyl-L-methionine biosynthesis; S-adenosyl-L-methionine from L-methionine: step 1/1.</text>
</comment>
<comment type="subunit">
    <text evidence="1">Homotetramer; dimer of dimers.</text>
</comment>
<comment type="subcellular location">
    <subcellularLocation>
        <location evidence="1">Cytoplasm</location>
    </subcellularLocation>
</comment>
<comment type="similarity">
    <text evidence="1">Belongs to the AdoMet synthase family.</text>
</comment>
<evidence type="ECO:0000255" key="1">
    <source>
        <dbReference type="HAMAP-Rule" id="MF_00086"/>
    </source>
</evidence>
<organism>
    <name type="scientific">Staphylococcus aureus (strain Mu3 / ATCC 700698)</name>
    <dbReference type="NCBI Taxonomy" id="418127"/>
    <lineage>
        <taxon>Bacteria</taxon>
        <taxon>Bacillati</taxon>
        <taxon>Bacillota</taxon>
        <taxon>Bacilli</taxon>
        <taxon>Bacillales</taxon>
        <taxon>Staphylococcaceae</taxon>
        <taxon>Staphylococcus</taxon>
    </lineage>
</organism>
<keyword id="KW-0067">ATP-binding</keyword>
<keyword id="KW-0963">Cytoplasm</keyword>
<keyword id="KW-0460">Magnesium</keyword>
<keyword id="KW-0479">Metal-binding</keyword>
<keyword id="KW-0547">Nucleotide-binding</keyword>
<keyword id="KW-0554">One-carbon metabolism</keyword>
<keyword id="KW-0630">Potassium</keyword>
<keyword id="KW-0808">Transferase</keyword>
<protein>
    <recommendedName>
        <fullName evidence="1">S-adenosylmethionine synthase</fullName>
        <shortName evidence="1">AdoMet synthase</shortName>
        <ecNumber evidence="1">2.5.1.6</ecNumber>
    </recommendedName>
    <alternativeName>
        <fullName evidence="1">MAT</fullName>
    </alternativeName>
    <alternativeName>
        <fullName evidence="1">Methionine adenosyltransferase</fullName>
    </alternativeName>
</protein>
<name>METK_STAA1</name>
<proteinExistence type="inferred from homology"/>